<name>FBK46_ARATH</name>
<keyword id="KW-0880">Kelch repeat</keyword>
<keyword id="KW-1185">Reference proteome</keyword>
<keyword id="KW-0677">Repeat</keyword>
<evidence type="ECO:0000305" key="1"/>
<accession>O80582</accession>
<accession>Q8L9E8</accession>
<reference key="1">
    <citation type="journal article" date="1999" name="Nature">
        <title>Sequence and analysis of chromosome 2 of the plant Arabidopsis thaliana.</title>
        <authorList>
            <person name="Lin X."/>
            <person name="Kaul S."/>
            <person name="Rounsley S.D."/>
            <person name="Shea T.P."/>
            <person name="Benito M.-I."/>
            <person name="Town C.D."/>
            <person name="Fujii C.Y."/>
            <person name="Mason T.M."/>
            <person name="Bowman C.L."/>
            <person name="Barnstead M.E."/>
            <person name="Feldblyum T.V."/>
            <person name="Buell C.R."/>
            <person name="Ketchum K.A."/>
            <person name="Lee J.J."/>
            <person name="Ronning C.M."/>
            <person name="Koo H.L."/>
            <person name="Moffat K.S."/>
            <person name="Cronin L.A."/>
            <person name="Shen M."/>
            <person name="Pai G."/>
            <person name="Van Aken S."/>
            <person name="Umayam L."/>
            <person name="Tallon L.J."/>
            <person name="Gill J.E."/>
            <person name="Adams M.D."/>
            <person name="Carrera A.J."/>
            <person name="Creasy T.H."/>
            <person name="Goodman H.M."/>
            <person name="Somerville C.R."/>
            <person name="Copenhaver G.P."/>
            <person name="Preuss D."/>
            <person name="Nierman W.C."/>
            <person name="White O."/>
            <person name="Eisen J.A."/>
            <person name="Salzberg S.L."/>
            <person name="Fraser C.M."/>
            <person name="Venter J.C."/>
        </authorList>
    </citation>
    <scope>NUCLEOTIDE SEQUENCE [LARGE SCALE GENOMIC DNA]</scope>
    <source>
        <strain>cv. Columbia</strain>
    </source>
</reference>
<reference key="2">
    <citation type="journal article" date="2017" name="Plant J.">
        <title>Araport11: a complete reannotation of the Arabidopsis thaliana reference genome.</title>
        <authorList>
            <person name="Cheng C.Y."/>
            <person name="Krishnakumar V."/>
            <person name="Chan A.P."/>
            <person name="Thibaud-Nissen F."/>
            <person name="Schobel S."/>
            <person name="Town C.D."/>
        </authorList>
    </citation>
    <scope>GENOME REANNOTATION</scope>
    <source>
        <strain>cv. Columbia</strain>
    </source>
</reference>
<reference key="3">
    <citation type="journal article" date="2003" name="Science">
        <title>Empirical analysis of transcriptional activity in the Arabidopsis genome.</title>
        <authorList>
            <person name="Yamada K."/>
            <person name="Lim J."/>
            <person name="Dale J.M."/>
            <person name="Chen H."/>
            <person name="Shinn P."/>
            <person name="Palm C.J."/>
            <person name="Southwick A.M."/>
            <person name="Wu H.C."/>
            <person name="Kim C.J."/>
            <person name="Nguyen M."/>
            <person name="Pham P.K."/>
            <person name="Cheuk R.F."/>
            <person name="Karlin-Newmann G."/>
            <person name="Liu S.X."/>
            <person name="Lam B."/>
            <person name="Sakano H."/>
            <person name="Wu T."/>
            <person name="Yu G."/>
            <person name="Miranda M."/>
            <person name="Quach H.L."/>
            <person name="Tripp M."/>
            <person name="Chang C.H."/>
            <person name="Lee J.M."/>
            <person name="Toriumi M.J."/>
            <person name="Chan M.M."/>
            <person name="Tang C.C."/>
            <person name="Onodera C.S."/>
            <person name="Deng J.M."/>
            <person name="Akiyama K."/>
            <person name="Ansari Y."/>
            <person name="Arakawa T."/>
            <person name="Banh J."/>
            <person name="Banno F."/>
            <person name="Bowser L."/>
            <person name="Brooks S.Y."/>
            <person name="Carninci P."/>
            <person name="Chao Q."/>
            <person name="Choy N."/>
            <person name="Enju A."/>
            <person name="Goldsmith A.D."/>
            <person name="Gurjal M."/>
            <person name="Hansen N.F."/>
            <person name="Hayashizaki Y."/>
            <person name="Johnson-Hopson C."/>
            <person name="Hsuan V.W."/>
            <person name="Iida K."/>
            <person name="Karnes M."/>
            <person name="Khan S."/>
            <person name="Koesema E."/>
            <person name="Ishida J."/>
            <person name="Jiang P.X."/>
            <person name="Jones T."/>
            <person name="Kawai J."/>
            <person name="Kamiya A."/>
            <person name="Meyers C."/>
            <person name="Nakajima M."/>
            <person name="Narusaka M."/>
            <person name="Seki M."/>
            <person name="Sakurai T."/>
            <person name="Satou M."/>
            <person name="Tamse R."/>
            <person name="Vaysberg M."/>
            <person name="Wallender E.K."/>
            <person name="Wong C."/>
            <person name="Yamamura Y."/>
            <person name="Yuan S."/>
            <person name="Shinozaki K."/>
            <person name="Davis R.W."/>
            <person name="Theologis A."/>
            <person name="Ecker J.R."/>
        </authorList>
    </citation>
    <scope>NUCLEOTIDE SEQUENCE [LARGE SCALE MRNA]</scope>
    <source>
        <strain>cv. Columbia</strain>
    </source>
</reference>
<reference key="4">
    <citation type="submission" date="2002-03" db="EMBL/GenBank/DDBJ databases">
        <title>Full-length cDNA from Arabidopsis thaliana.</title>
        <authorList>
            <person name="Brover V.V."/>
            <person name="Troukhan M.E."/>
            <person name="Alexandrov N.A."/>
            <person name="Lu Y.-P."/>
            <person name="Flavell R.B."/>
            <person name="Feldmann K.A."/>
        </authorList>
    </citation>
    <scope>NUCLEOTIDE SEQUENCE [LARGE SCALE MRNA]</scope>
</reference>
<proteinExistence type="evidence at transcript level"/>
<sequence length="409" mass="45887">MTMEVSKKKGGDFQQCHELIPGLPSELALECLVRVPFQFQSAMRSVCRSWRSLLSDSSFIQERRRCGKTELLLCLVQPLTPPIPASKSVDETLMVDEKKSEDESHPRVFCTPRFGLSVYNAAMSTWHRVAFPEEEQIPLFCECVVLQDAGKILLIGGWDPETLQPTRDVYVLEFAGRKWRRGAPMKESRSFFACASVSPTKVYVAGGHDDQKNALRSAEVYDVEKDEWSSVTPMTEGRDECQGFAVGMGLRFCVLSGYGTESQGRFRSDGEIYDPATDSWSRIDNVWRFPDTSPRGRTAGDFRSSSTLWCFTDTDLQSERRWETNDDSRNLKLDLQSIQLPMTGSSVFAGSLGGESVVMIGGKRESEGEGEGGVMMKMTTEKKMGKWSHHVHIPCDFSTLPFSHASIYV</sequence>
<organism>
    <name type="scientific">Arabidopsis thaliana</name>
    <name type="common">Mouse-ear cress</name>
    <dbReference type="NCBI Taxonomy" id="3702"/>
    <lineage>
        <taxon>Eukaryota</taxon>
        <taxon>Viridiplantae</taxon>
        <taxon>Streptophyta</taxon>
        <taxon>Embryophyta</taxon>
        <taxon>Tracheophyta</taxon>
        <taxon>Spermatophyta</taxon>
        <taxon>Magnoliopsida</taxon>
        <taxon>eudicotyledons</taxon>
        <taxon>Gunneridae</taxon>
        <taxon>Pentapetalae</taxon>
        <taxon>rosids</taxon>
        <taxon>malvids</taxon>
        <taxon>Brassicales</taxon>
        <taxon>Brassicaceae</taxon>
        <taxon>Camelineae</taxon>
        <taxon>Arabidopsis</taxon>
    </lineage>
</organism>
<gene>
    <name type="ordered locus">At2g44130</name>
    <name type="ORF">F6E13.26</name>
</gene>
<feature type="chain" id="PRO_0000283206" description="F-box/kelch-repeat protein At2g44130">
    <location>
        <begin position="1"/>
        <end position="409"/>
    </location>
</feature>
<feature type="domain" description="F-box">
    <location>
        <begin position="17"/>
        <end position="63"/>
    </location>
</feature>
<feature type="repeat" description="Kelch 1">
    <location>
        <begin position="98"/>
        <end position="148"/>
    </location>
</feature>
<feature type="repeat" description="Kelch 2">
    <location>
        <begin position="151"/>
        <end position="199"/>
    </location>
</feature>
<feature type="repeat" description="Kelch 3">
    <location>
        <begin position="201"/>
        <end position="248"/>
    </location>
</feature>
<feature type="repeat" description="Kelch 4">
    <location>
        <begin position="251"/>
        <end position="300"/>
    </location>
</feature>
<feature type="sequence conflict" description="In Ref. 4; AAM66007." evidence="1" ref="4">
    <original>E</original>
    <variation>D</variation>
    <location>
        <position position="18"/>
    </location>
</feature>
<feature type="sequence conflict" description="In Ref. 4; AAM66007." evidence="1" ref="4">
    <original>M</original>
    <variation>T</variation>
    <location>
        <position position="248"/>
    </location>
</feature>
<feature type="sequence conflict" description="In Ref. 4; AAM66007." evidence="1" ref="4">
    <original>D</original>
    <variation>N</variation>
    <location>
        <position position="278"/>
    </location>
</feature>
<protein>
    <recommendedName>
        <fullName>F-box/kelch-repeat protein At2g44130</fullName>
    </recommendedName>
</protein>
<dbReference type="EMBL" id="AC004005">
    <property type="protein sequence ID" value="AAC23417.2"/>
    <property type="molecule type" value="Genomic_DNA"/>
</dbReference>
<dbReference type="EMBL" id="CP002685">
    <property type="protein sequence ID" value="AEC10382.1"/>
    <property type="molecule type" value="Genomic_DNA"/>
</dbReference>
<dbReference type="EMBL" id="AY074864">
    <property type="protein sequence ID" value="AAL75886.1"/>
    <property type="molecule type" value="mRNA"/>
</dbReference>
<dbReference type="EMBL" id="AY124843">
    <property type="protein sequence ID" value="AAM70552.1"/>
    <property type="molecule type" value="mRNA"/>
</dbReference>
<dbReference type="EMBL" id="AY088471">
    <property type="protein sequence ID" value="AAM66007.1"/>
    <property type="molecule type" value="mRNA"/>
</dbReference>
<dbReference type="PIR" id="T00693">
    <property type="entry name" value="T00693"/>
</dbReference>
<dbReference type="RefSeq" id="NP_566009.1">
    <property type="nucleotide sequence ID" value="NM_129976.2"/>
</dbReference>
<dbReference type="SMR" id="O80582"/>
<dbReference type="BioGRID" id="4355">
    <property type="interactions" value="12"/>
</dbReference>
<dbReference type="FunCoup" id="O80582">
    <property type="interactions" value="2"/>
</dbReference>
<dbReference type="IntAct" id="O80582">
    <property type="interactions" value="1"/>
</dbReference>
<dbReference type="STRING" id="3702.O80582"/>
<dbReference type="GlyGen" id="O80582">
    <property type="glycosylation" value="1 site"/>
</dbReference>
<dbReference type="PaxDb" id="3702-AT2G44130.1"/>
<dbReference type="ProteomicsDB" id="230989"/>
<dbReference type="EnsemblPlants" id="AT2G44130.1">
    <property type="protein sequence ID" value="AT2G44130.1"/>
    <property type="gene ID" value="AT2G44130"/>
</dbReference>
<dbReference type="GeneID" id="819019"/>
<dbReference type="Gramene" id="AT2G44130.1">
    <property type="protein sequence ID" value="AT2G44130.1"/>
    <property type="gene ID" value="AT2G44130"/>
</dbReference>
<dbReference type="KEGG" id="ath:AT2G44130"/>
<dbReference type="Araport" id="AT2G44130"/>
<dbReference type="TAIR" id="AT2G44130">
    <property type="gene designation" value="KMD3"/>
</dbReference>
<dbReference type="eggNOG" id="KOG1072">
    <property type="taxonomic scope" value="Eukaryota"/>
</dbReference>
<dbReference type="HOGENOM" id="CLU_028510_1_0_1"/>
<dbReference type="InParanoid" id="O80582"/>
<dbReference type="OMA" id="RENEWSE"/>
<dbReference type="PhylomeDB" id="O80582"/>
<dbReference type="PRO" id="PR:O80582"/>
<dbReference type="Proteomes" id="UP000006548">
    <property type="component" value="Chromosome 2"/>
</dbReference>
<dbReference type="ExpressionAtlas" id="O80582">
    <property type="expression patterns" value="baseline and differential"/>
</dbReference>
<dbReference type="GO" id="GO:0005829">
    <property type="term" value="C:cytosol"/>
    <property type="evidence" value="ECO:0000314"/>
    <property type="project" value="TAIR"/>
</dbReference>
<dbReference type="GO" id="GO:0080037">
    <property type="term" value="P:negative regulation of cytokinin-activated signaling pathway"/>
    <property type="evidence" value="ECO:0007669"/>
    <property type="project" value="InterPro"/>
</dbReference>
<dbReference type="GO" id="GO:2000762">
    <property type="term" value="P:regulation of phenylpropanoid metabolic process"/>
    <property type="evidence" value="ECO:0000315"/>
    <property type="project" value="TAIR"/>
</dbReference>
<dbReference type="CDD" id="cd22152">
    <property type="entry name" value="F-box_AtAFR-like"/>
    <property type="match status" value="1"/>
</dbReference>
<dbReference type="Gene3D" id="2.120.10.80">
    <property type="entry name" value="Kelch-type beta propeller"/>
    <property type="match status" value="1"/>
</dbReference>
<dbReference type="InterPro" id="IPR036047">
    <property type="entry name" value="F-box-like_dom_sf"/>
</dbReference>
<dbReference type="InterPro" id="IPR001810">
    <property type="entry name" value="F-box_dom"/>
</dbReference>
<dbReference type="InterPro" id="IPR015915">
    <property type="entry name" value="Kelch-typ_b-propeller"/>
</dbReference>
<dbReference type="InterPro" id="IPR006652">
    <property type="entry name" value="Kelch_1"/>
</dbReference>
<dbReference type="InterPro" id="IPR044595">
    <property type="entry name" value="KMD1-4"/>
</dbReference>
<dbReference type="PANTHER" id="PTHR46407:SF18">
    <property type="entry name" value="F-BOX DOMAIN-CONTAINING PROTEIN"/>
    <property type="match status" value="1"/>
</dbReference>
<dbReference type="PANTHER" id="PTHR46407">
    <property type="entry name" value="OS02G0208700 PROTEIN"/>
    <property type="match status" value="1"/>
</dbReference>
<dbReference type="Pfam" id="PF00646">
    <property type="entry name" value="F-box"/>
    <property type="match status" value="1"/>
</dbReference>
<dbReference type="Pfam" id="PF24681">
    <property type="entry name" value="Kelch_KLHDC2_KLHL20_DRC7"/>
    <property type="match status" value="1"/>
</dbReference>
<dbReference type="SMART" id="SM00256">
    <property type="entry name" value="FBOX"/>
    <property type="match status" value="1"/>
</dbReference>
<dbReference type="SMART" id="SM00612">
    <property type="entry name" value="Kelch"/>
    <property type="match status" value="2"/>
</dbReference>
<dbReference type="SUPFAM" id="SSF81383">
    <property type="entry name" value="F-box domain"/>
    <property type="match status" value="1"/>
</dbReference>
<dbReference type="SUPFAM" id="SSF117281">
    <property type="entry name" value="Kelch motif"/>
    <property type="match status" value="1"/>
</dbReference>